<organism>
    <name type="scientific">Pan troglodytes</name>
    <name type="common">Chimpanzee</name>
    <dbReference type="NCBI Taxonomy" id="9598"/>
    <lineage>
        <taxon>Eukaryota</taxon>
        <taxon>Metazoa</taxon>
        <taxon>Chordata</taxon>
        <taxon>Craniata</taxon>
        <taxon>Vertebrata</taxon>
        <taxon>Euteleostomi</taxon>
        <taxon>Mammalia</taxon>
        <taxon>Eutheria</taxon>
        <taxon>Euarchontoglires</taxon>
        <taxon>Primates</taxon>
        <taxon>Haplorrhini</taxon>
        <taxon>Catarrhini</taxon>
        <taxon>Hominidae</taxon>
        <taxon>Pan</taxon>
    </lineage>
</organism>
<accession>Q646B3</accession>
<accession>Q646A6</accession>
<comment type="function">
    <text evidence="1">Receptor that may play a role in the perception of bitterness and is gustducin-linked. May play a role in sensing the chemical composition of the gastrointestinal content. The activity of this receptor may stimulate alpha gustducin, mediate PLC-beta-2 activation and lead to the gating of TRPM5 (By similarity).</text>
</comment>
<comment type="subunit">
    <text evidence="2">Interacts with RTP3 and RTP4.</text>
</comment>
<comment type="subcellular location">
    <subcellularLocation>
        <location evidence="2">Cell membrane</location>
        <topology evidence="3">Multi-pass membrane protein</topology>
    </subcellularLocation>
</comment>
<comment type="miscellaneous">
    <text>Most taste cells may be activated by a limited number of bitter compounds; individual taste cells can discriminate among bitter stimuli.</text>
</comment>
<comment type="similarity">
    <text evidence="4">Belongs to the G-protein coupled receptor T2R family.</text>
</comment>
<sequence length="291" mass="33947">MIPIQLTVFFMIIYVLESLTIIVQSSLIVAVLGREWLQVRRLMPVDMILISLGISRFCLQWASMLNNFCSYFNLNYVLCNLTITWEFFNILTFWLNSLLTVFYCIKVSSFTHHIFLWLRWRILRLFPWILLGSLMITCVTIIPSAIGNYIQIQLLTMEHLPRNSTVTDKLEKFHQYQFQAHTVALVIPFILFLASTILLMASLTKQIQHHSTGHCNPSMKAHFTALRSLAVLFIVFTSYFLTILITIIGTLFDKRCWLWVWEAFVYAFILMHSTSLMLSSPTLKRILKGKC</sequence>
<gene>
    <name type="primary">TAS2R16</name>
</gene>
<feature type="chain" id="PRO_0000082264" description="Taste receptor type 2 member 16">
    <location>
        <begin position="1"/>
        <end position="291"/>
    </location>
</feature>
<feature type="topological domain" description="Extracellular" evidence="3">
    <location>
        <position position="1"/>
    </location>
</feature>
<feature type="transmembrane region" description="Helical; Name=1" evidence="3">
    <location>
        <begin position="2"/>
        <end position="22"/>
    </location>
</feature>
<feature type="topological domain" description="Cytoplasmic" evidence="3">
    <location>
        <begin position="23"/>
        <end position="41"/>
    </location>
</feature>
<feature type="transmembrane region" description="Helical; Name=2" evidence="3">
    <location>
        <begin position="42"/>
        <end position="62"/>
    </location>
</feature>
<feature type="topological domain" description="Extracellular" evidence="3">
    <location>
        <begin position="63"/>
        <end position="84"/>
    </location>
</feature>
<feature type="transmembrane region" description="Helical; Name=3" evidence="3">
    <location>
        <begin position="85"/>
        <end position="105"/>
    </location>
</feature>
<feature type="topological domain" description="Cytoplasmic" evidence="3">
    <location>
        <begin position="106"/>
        <end position="125"/>
    </location>
</feature>
<feature type="transmembrane region" description="Helical; Name=4" evidence="3">
    <location>
        <begin position="126"/>
        <end position="146"/>
    </location>
</feature>
<feature type="topological domain" description="Extracellular" evidence="3">
    <location>
        <begin position="147"/>
        <end position="182"/>
    </location>
</feature>
<feature type="transmembrane region" description="Helical; Name=5" evidence="3">
    <location>
        <begin position="183"/>
        <end position="203"/>
    </location>
</feature>
<feature type="topological domain" description="Cytoplasmic" evidence="3">
    <location>
        <begin position="204"/>
        <end position="228"/>
    </location>
</feature>
<feature type="transmembrane region" description="Helical; Name=6" evidence="3">
    <location>
        <begin position="229"/>
        <end position="249"/>
    </location>
</feature>
<feature type="topological domain" description="Extracellular" evidence="3">
    <location>
        <begin position="250"/>
        <end position="257"/>
    </location>
</feature>
<feature type="transmembrane region" description="Helical; Name=7" evidence="3">
    <location>
        <begin position="258"/>
        <end position="278"/>
    </location>
</feature>
<feature type="topological domain" description="Cytoplasmic" evidence="3">
    <location>
        <begin position="279"/>
        <end position="291"/>
    </location>
</feature>
<feature type="glycosylation site" description="N-linked (GlcNAc...) asparagine" evidence="3">
    <location>
        <position position="80"/>
    </location>
</feature>
<feature type="glycosylation site" description="N-linked (GlcNAc...) asparagine" evidence="3">
    <location>
        <position position="163"/>
    </location>
</feature>
<protein>
    <recommendedName>
        <fullName>Taste receptor type 2 member 16</fullName>
        <shortName>T2R16</shortName>
    </recommendedName>
</protein>
<reference key="1">
    <citation type="journal article" date="2005" name="Mol. Biol. Evol.">
        <title>Evolution of bitter taste receptors in humans and apes.</title>
        <authorList>
            <person name="Fischer A."/>
            <person name="Gilad Y."/>
            <person name="Man O."/>
            <person name="Paeaebo S."/>
        </authorList>
    </citation>
    <scope>NUCLEOTIDE SEQUENCE [GENOMIC DNA]</scope>
</reference>
<proteinExistence type="inferred from homology"/>
<name>T2R16_PANTR</name>
<dbReference type="EMBL" id="AY724890">
    <property type="protein sequence ID" value="AAU21106.1"/>
    <property type="molecule type" value="Genomic_DNA"/>
</dbReference>
<dbReference type="EMBL" id="AY724897">
    <property type="protein sequence ID" value="AAU21113.1"/>
    <property type="molecule type" value="Genomic_DNA"/>
</dbReference>
<dbReference type="RefSeq" id="NP_001009160.1">
    <property type="nucleotide sequence ID" value="NM_001009160.1"/>
</dbReference>
<dbReference type="RefSeq" id="XP_016800871.1">
    <property type="nucleotide sequence ID" value="XM_016945382.1"/>
</dbReference>
<dbReference type="SMR" id="Q646B3"/>
<dbReference type="FunCoup" id="Q646B3">
    <property type="interactions" value="180"/>
</dbReference>
<dbReference type="STRING" id="9598.ENSPTRP00000033625"/>
<dbReference type="GlyCosmos" id="Q646B3">
    <property type="glycosylation" value="2 sites, No reported glycans"/>
</dbReference>
<dbReference type="PaxDb" id="9598-ENSPTRP00000033625"/>
<dbReference type="Ensembl" id="ENSPTRT00000036368.2">
    <property type="protein sequence ID" value="ENSPTRP00000033625.1"/>
    <property type="gene ID" value="ENSPTRG00000019634.4"/>
</dbReference>
<dbReference type="Ensembl" id="ENSPTRT00000087556.1">
    <property type="protein sequence ID" value="ENSPTRP00000089910.1"/>
    <property type="gene ID" value="ENSPTRG00000042680.1"/>
</dbReference>
<dbReference type="GeneID" id="494113"/>
<dbReference type="KEGG" id="ptr:494113"/>
<dbReference type="CTD" id="50833"/>
<dbReference type="VGNC" id="VGNC:8769">
    <property type="gene designation" value="TAS2R16"/>
</dbReference>
<dbReference type="eggNOG" id="ENOG502S2SI">
    <property type="taxonomic scope" value="Eukaryota"/>
</dbReference>
<dbReference type="GeneTree" id="ENSGT01100000263477"/>
<dbReference type="HOGENOM" id="CLU_072337_1_1_1"/>
<dbReference type="InParanoid" id="Q646B3"/>
<dbReference type="OMA" id="REWVQVK"/>
<dbReference type="OrthoDB" id="12235at9604"/>
<dbReference type="TreeFam" id="TF335891"/>
<dbReference type="Proteomes" id="UP000002277">
    <property type="component" value="Chromosome 7"/>
</dbReference>
<dbReference type="GO" id="GO:0016020">
    <property type="term" value="C:membrane"/>
    <property type="evidence" value="ECO:0000318"/>
    <property type="project" value="GO_Central"/>
</dbReference>
<dbReference type="GO" id="GO:0005886">
    <property type="term" value="C:plasma membrane"/>
    <property type="evidence" value="ECO:0007669"/>
    <property type="project" value="UniProtKB-SubCell"/>
</dbReference>
<dbReference type="GO" id="GO:0033038">
    <property type="term" value="F:bitter taste receptor activity"/>
    <property type="evidence" value="ECO:0000318"/>
    <property type="project" value="GO_Central"/>
</dbReference>
<dbReference type="GO" id="GO:0004930">
    <property type="term" value="F:G protein-coupled receptor activity"/>
    <property type="evidence" value="ECO:0007669"/>
    <property type="project" value="UniProtKB-KW"/>
</dbReference>
<dbReference type="GO" id="GO:0001580">
    <property type="term" value="P:detection of chemical stimulus involved in sensory perception of bitter taste"/>
    <property type="evidence" value="ECO:0000318"/>
    <property type="project" value="GO_Central"/>
</dbReference>
<dbReference type="CDD" id="cd15017">
    <property type="entry name" value="7tm_TAS2R16"/>
    <property type="match status" value="1"/>
</dbReference>
<dbReference type="FunFam" id="1.20.1070.10:FF:000055">
    <property type="entry name" value="Taste receptor type 2"/>
    <property type="match status" value="1"/>
</dbReference>
<dbReference type="InterPro" id="IPR007960">
    <property type="entry name" value="TAS2R"/>
</dbReference>
<dbReference type="PANTHER" id="PTHR11394">
    <property type="entry name" value="TASTE RECEPTOR TYPE 2"/>
    <property type="match status" value="1"/>
</dbReference>
<dbReference type="PANTHER" id="PTHR11394:SF68">
    <property type="entry name" value="TASTE RECEPTOR TYPE 2 MEMBER 16"/>
    <property type="match status" value="1"/>
</dbReference>
<dbReference type="Pfam" id="PF05296">
    <property type="entry name" value="TAS2R"/>
    <property type="match status" value="1"/>
</dbReference>
<dbReference type="SUPFAM" id="SSF81321">
    <property type="entry name" value="Family A G protein-coupled receptor-like"/>
    <property type="match status" value="1"/>
</dbReference>
<keyword id="KW-1003">Cell membrane</keyword>
<keyword id="KW-0297">G-protein coupled receptor</keyword>
<keyword id="KW-0325">Glycoprotein</keyword>
<keyword id="KW-0472">Membrane</keyword>
<keyword id="KW-0675">Receptor</keyword>
<keyword id="KW-1185">Reference proteome</keyword>
<keyword id="KW-0716">Sensory transduction</keyword>
<keyword id="KW-0919">Taste</keyword>
<keyword id="KW-0807">Transducer</keyword>
<keyword id="KW-0812">Transmembrane</keyword>
<keyword id="KW-1133">Transmembrane helix</keyword>
<evidence type="ECO:0000250" key="1"/>
<evidence type="ECO:0000250" key="2">
    <source>
        <dbReference type="UniProtKB" id="Q9NYV7"/>
    </source>
</evidence>
<evidence type="ECO:0000255" key="3"/>
<evidence type="ECO:0000305" key="4"/>